<proteinExistence type="inferred from homology"/>
<keyword id="KW-0963">Cytoplasm</keyword>
<keyword id="KW-0342">GTP-binding</keyword>
<keyword id="KW-0378">Hydrolase</keyword>
<keyword id="KW-0460">Magnesium</keyword>
<keyword id="KW-0479">Metal-binding</keyword>
<keyword id="KW-0547">Nucleotide-binding</keyword>
<keyword id="KW-1185">Reference proteome</keyword>
<name>OBG_NITEU</name>
<protein>
    <recommendedName>
        <fullName evidence="1">GTPase Obg</fullName>
        <ecNumber evidence="1">3.6.5.-</ecNumber>
    </recommendedName>
    <alternativeName>
        <fullName evidence="1">GTP-binding protein Obg</fullName>
    </alternativeName>
</protein>
<reference key="1">
    <citation type="journal article" date="2003" name="J. Bacteriol.">
        <title>Complete genome sequence of the ammonia-oxidizing bacterium and obligate chemolithoautotroph Nitrosomonas europaea.</title>
        <authorList>
            <person name="Chain P."/>
            <person name="Lamerdin J.E."/>
            <person name="Larimer F.W."/>
            <person name="Regala W."/>
            <person name="Lao V."/>
            <person name="Land M.L."/>
            <person name="Hauser L."/>
            <person name="Hooper A.B."/>
            <person name="Klotz M.G."/>
            <person name="Norton J."/>
            <person name="Sayavedra-Soto L.A."/>
            <person name="Arciero D.M."/>
            <person name="Hommes N.G."/>
            <person name="Whittaker M.M."/>
            <person name="Arp D.J."/>
        </authorList>
    </citation>
    <scope>NUCLEOTIDE SEQUENCE [LARGE SCALE GENOMIC DNA]</scope>
    <source>
        <strain>ATCC 19718 / CIP 103999 / KCTC 2705 / NBRC 14298</strain>
    </source>
</reference>
<gene>
    <name evidence="1" type="primary">obg</name>
    <name type="ordered locus">NE1291</name>
</gene>
<comment type="function">
    <text evidence="1">An essential GTPase which binds GTP, GDP and possibly (p)ppGpp with moderate affinity, with high nucleotide exchange rates and a fairly low GTP hydrolysis rate. Plays a role in control of the cell cycle, stress response, ribosome biogenesis and in those bacteria that undergo differentiation, in morphogenesis control.</text>
</comment>
<comment type="cofactor">
    <cofactor evidence="1">
        <name>Mg(2+)</name>
        <dbReference type="ChEBI" id="CHEBI:18420"/>
    </cofactor>
</comment>
<comment type="subunit">
    <text evidence="1">Monomer.</text>
</comment>
<comment type="subcellular location">
    <subcellularLocation>
        <location evidence="1">Cytoplasm</location>
    </subcellularLocation>
</comment>
<comment type="similarity">
    <text evidence="1">Belongs to the TRAFAC class OBG-HflX-like GTPase superfamily. OBG GTPase family.</text>
</comment>
<accession>Q82V20</accession>
<evidence type="ECO:0000255" key="1">
    <source>
        <dbReference type="HAMAP-Rule" id="MF_01454"/>
    </source>
</evidence>
<evidence type="ECO:0000255" key="2">
    <source>
        <dbReference type="PROSITE-ProRule" id="PRU01231"/>
    </source>
</evidence>
<dbReference type="EC" id="3.6.5.-" evidence="1"/>
<dbReference type="EMBL" id="AL954747">
    <property type="protein sequence ID" value="CAD85202.1"/>
    <property type="molecule type" value="Genomic_DNA"/>
</dbReference>
<dbReference type="SMR" id="Q82V20"/>
<dbReference type="STRING" id="228410.NE1291"/>
<dbReference type="GeneID" id="87104466"/>
<dbReference type="KEGG" id="neu:NE1291"/>
<dbReference type="eggNOG" id="COG0536">
    <property type="taxonomic scope" value="Bacteria"/>
</dbReference>
<dbReference type="HOGENOM" id="CLU_011747_2_0_4"/>
<dbReference type="OrthoDB" id="9807318at2"/>
<dbReference type="PhylomeDB" id="Q82V20"/>
<dbReference type="Proteomes" id="UP000001416">
    <property type="component" value="Chromosome"/>
</dbReference>
<dbReference type="GO" id="GO:0005737">
    <property type="term" value="C:cytoplasm"/>
    <property type="evidence" value="ECO:0007669"/>
    <property type="project" value="UniProtKB-SubCell"/>
</dbReference>
<dbReference type="GO" id="GO:0005525">
    <property type="term" value="F:GTP binding"/>
    <property type="evidence" value="ECO:0007669"/>
    <property type="project" value="UniProtKB-UniRule"/>
</dbReference>
<dbReference type="GO" id="GO:0003924">
    <property type="term" value="F:GTPase activity"/>
    <property type="evidence" value="ECO:0007669"/>
    <property type="project" value="UniProtKB-UniRule"/>
</dbReference>
<dbReference type="GO" id="GO:0000287">
    <property type="term" value="F:magnesium ion binding"/>
    <property type="evidence" value="ECO:0007669"/>
    <property type="project" value="InterPro"/>
</dbReference>
<dbReference type="GO" id="GO:0042254">
    <property type="term" value="P:ribosome biogenesis"/>
    <property type="evidence" value="ECO:0007669"/>
    <property type="project" value="UniProtKB-UniRule"/>
</dbReference>
<dbReference type="CDD" id="cd01898">
    <property type="entry name" value="Obg"/>
    <property type="match status" value="1"/>
</dbReference>
<dbReference type="FunFam" id="2.70.210.12:FF:000001">
    <property type="entry name" value="GTPase Obg"/>
    <property type="match status" value="1"/>
</dbReference>
<dbReference type="Gene3D" id="2.70.210.12">
    <property type="entry name" value="GTP1/OBG domain"/>
    <property type="match status" value="1"/>
</dbReference>
<dbReference type="Gene3D" id="3.40.50.300">
    <property type="entry name" value="P-loop containing nucleotide triphosphate hydrolases"/>
    <property type="match status" value="1"/>
</dbReference>
<dbReference type="HAMAP" id="MF_01454">
    <property type="entry name" value="GTPase_Obg"/>
    <property type="match status" value="1"/>
</dbReference>
<dbReference type="InterPro" id="IPR031167">
    <property type="entry name" value="G_OBG"/>
</dbReference>
<dbReference type="InterPro" id="IPR006073">
    <property type="entry name" value="GTP-bd"/>
</dbReference>
<dbReference type="InterPro" id="IPR014100">
    <property type="entry name" value="GTP-bd_Obg/CgtA"/>
</dbReference>
<dbReference type="InterPro" id="IPR006074">
    <property type="entry name" value="GTP1-OBG_CS"/>
</dbReference>
<dbReference type="InterPro" id="IPR006169">
    <property type="entry name" value="GTP1_OBG_dom"/>
</dbReference>
<dbReference type="InterPro" id="IPR036726">
    <property type="entry name" value="GTP1_OBG_dom_sf"/>
</dbReference>
<dbReference type="InterPro" id="IPR045086">
    <property type="entry name" value="OBG_GTPase"/>
</dbReference>
<dbReference type="InterPro" id="IPR027417">
    <property type="entry name" value="P-loop_NTPase"/>
</dbReference>
<dbReference type="NCBIfam" id="TIGR02729">
    <property type="entry name" value="Obg_CgtA"/>
    <property type="match status" value="1"/>
</dbReference>
<dbReference type="NCBIfam" id="NF008955">
    <property type="entry name" value="PRK12297.1"/>
    <property type="match status" value="1"/>
</dbReference>
<dbReference type="NCBIfam" id="NF008956">
    <property type="entry name" value="PRK12299.1"/>
    <property type="match status" value="1"/>
</dbReference>
<dbReference type="PANTHER" id="PTHR11702">
    <property type="entry name" value="DEVELOPMENTALLY REGULATED GTP-BINDING PROTEIN-RELATED"/>
    <property type="match status" value="1"/>
</dbReference>
<dbReference type="PANTHER" id="PTHR11702:SF31">
    <property type="entry name" value="MITOCHONDRIAL RIBOSOME-ASSOCIATED GTPASE 2"/>
    <property type="match status" value="1"/>
</dbReference>
<dbReference type="Pfam" id="PF01018">
    <property type="entry name" value="GTP1_OBG"/>
    <property type="match status" value="1"/>
</dbReference>
<dbReference type="Pfam" id="PF01926">
    <property type="entry name" value="MMR_HSR1"/>
    <property type="match status" value="1"/>
</dbReference>
<dbReference type="PIRSF" id="PIRSF002401">
    <property type="entry name" value="GTP_bd_Obg/CgtA"/>
    <property type="match status" value="1"/>
</dbReference>
<dbReference type="PRINTS" id="PR00326">
    <property type="entry name" value="GTP1OBG"/>
</dbReference>
<dbReference type="SUPFAM" id="SSF82051">
    <property type="entry name" value="Obg GTP-binding protein N-terminal domain"/>
    <property type="match status" value="1"/>
</dbReference>
<dbReference type="SUPFAM" id="SSF52540">
    <property type="entry name" value="P-loop containing nucleoside triphosphate hydrolases"/>
    <property type="match status" value="1"/>
</dbReference>
<dbReference type="PROSITE" id="PS51710">
    <property type="entry name" value="G_OBG"/>
    <property type="match status" value="1"/>
</dbReference>
<dbReference type="PROSITE" id="PS00905">
    <property type="entry name" value="GTP1_OBG"/>
    <property type="match status" value="1"/>
</dbReference>
<dbReference type="PROSITE" id="PS51883">
    <property type="entry name" value="OBG"/>
    <property type="match status" value="1"/>
</dbReference>
<sequence length="343" mass="37594">MKFIDEVKIQISAGDGGNGVASFRREKFIPRGGPDGGDGGHGGSIYALADHNLNTLIDYRFTPVFRAKRGENGRGSDCYGKGAEDIVLRMPVGTIITNDLTGELVADLEHDQQKVLLAKGGRGGLGNLHFKSSTNRAPRQFTHGEAGEQFELRLELRVLADVGLLGLPNAGKSTLIRAVSAARPKVADYPFTTLYPNLGVVRVDAGHSFVMADIPGLIEGAAEGAGLGHRFLKHLGRTRLLLHVIDVAPFDENVDIVHSARALVDELRKFDETLYRKPRWLVFNKVDMLPEDEQQAVCTRLLQAMNWQERWFAISALTGRGCQALIYAIMGHLQQLQSDSEET</sequence>
<feature type="chain" id="PRO_0000386092" description="GTPase Obg">
    <location>
        <begin position="1"/>
        <end position="343"/>
    </location>
</feature>
<feature type="domain" description="Obg" evidence="2">
    <location>
        <begin position="1"/>
        <end position="159"/>
    </location>
</feature>
<feature type="domain" description="OBG-type G" evidence="1">
    <location>
        <begin position="160"/>
        <end position="334"/>
    </location>
</feature>
<feature type="binding site" evidence="1">
    <location>
        <begin position="166"/>
        <end position="173"/>
    </location>
    <ligand>
        <name>GTP</name>
        <dbReference type="ChEBI" id="CHEBI:37565"/>
    </ligand>
</feature>
<feature type="binding site" evidence="1">
    <location>
        <position position="173"/>
    </location>
    <ligand>
        <name>Mg(2+)</name>
        <dbReference type="ChEBI" id="CHEBI:18420"/>
    </ligand>
</feature>
<feature type="binding site" evidence="1">
    <location>
        <begin position="191"/>
        <end position="195"/>
    </location>
    <ligand>
        <name>GTP</name>
        <dbReference type="ChEBI" id="CHEBI:37565"/>
    </ligand>
</feature>
<feature type="binding site" evidence="1">
    <location>
        <position position="193"/>
    </location>
    <ligand>
        <name>Mg(2+)</name>
        <dbReference type="ChEBI" id="CHEBI:18420"/>
    </ligand>
</feature>
<feature type="binding site" evidence="1">
    <location>
        <begin position="213"/>
        <end position="216"/>
    </location>
    <ligand>
        <name>GTP</name>
        <dbReference type="ChEBI" id="CHEBI:37565"/>
    </ligand>
</feature>
<feature type="binding site" evidence="1">
    <location>
        <begin position="284"/>
        <end position="287"/>
    </location>
    <ligand>
        <name>GTP</name>
        <dbReference type="ChEBI" id="CHEBI:37565"/>
    </ligand>
</feature>
<feature type="binding site" evidence="1">
    <location>
        <begin position="315"/>
        <end position="317"/>
    </location>
    <ligand>
        <name>GTP</name>
        <dbReference type="ChEBI" id="CHEBI:37565"/>
    </ligand>
</feature>
<organism>
    <name type="scientific">Nitrosomonas europaea (strain ATCC 19718 / CIP 103999 / KCTC 2705 / NBRC 14298)</name>
    <dbReference type="NCBI Taxonomy" id="228410"/>
    <lineage>
        <taxon>Bacteria</taxon>
        <taxon>Pseudomonadati</taxon>
        <taxon>Pseudomonadota</taxon>
        <taxon>Betaproteobacteria</taxon>
        <taxon>Nitrosomonadales</taxon>
        <taxon>Nitrosomonadaceae</taxon>
        <taxon>Nitrosomonas</taxon>
    </lineage>
</organism>